<name>DNAK_UREPA</name>
<comment type="function">
    <text evidence="1">Acts as a chaperone.</text>
</comment>
<comment type="induction">
    <text evidence="1">By stress conditions e.g. heat shock (By similarity).</text>
</comment>
<comment type="similarity">
    <text evidence="3">Belongs to the heat shock protein 70 family.</text>
</comment>
<gene>
    <name type="primary">dnaK</name>
    <name type="ordered locus">UU339</name>
</gene>
<evidence type="ECO:0000250" key="1"/>
<evidence type="ECO:0000256" key="2">
    <source>
        <dbReference type="SAM" id="MobiDB-lite"/>
    </source>
</evidence>
<evidence type="ECO:0000305" key="3"/>
<feature type="chain" id="PRO_0000078580" description="Chaperone protein DnaK">
    <location>
        <begin position="1"/>
        <end position="603"/>
    </location>
</feature>
<feature type="region of interest" description="Disordered" evidence="2">
    <location>
        <begin position="573"/>
        <end position="603"/>
    </location>
</feature>
<feature type="compositionally biased region" description="Low complexity" evidence="2">
    <location>
        <begin position="573"/>
        <end position="586"/>
    </location>
</feature>
<feature type="compositionally biased region" description="Polar residues" evidence="2">
    <location>
        <begin position="594"/>
        <end position="603"/>
    </location>
</feature>
<feature type="modified residue" description="Phosphothreonine; by autocatalysis" evidence="1">
    <location>
        <position position="175"/>
    </location>
</feature>
<keyword id="KW-0067">ATP-binding</keyword>
<keyword id="KW-0143">Chaperone</keyword>
<keyword id="KW-0547">Nucleotide-binding</keyword>
<keyword id="KW-0597">Phosphoprotein</keyword>
<keyword id="KW-1185">Reference proteome</keyword>
<keyword id="KW-0346">Stress response</keyword>
<sequence length="603" mass="65956">MAKEIILGIDLGTTNSCVAVIENKKPIVLENPEGKRTVPSVVSFNGDEVLVGDAAKRKQITNPNTISSIKRLMGTKEKVTVLNKDYTPEEISAKILTYIKEYAEKKIGAKVNKAVITVPAYFDDAQRQATKNAGIIAGLSVERIINEPTAAALAYGIDKLDKEQKILVFDLGGGTFDVSVLDMADGTFEVLSTSGDNHLGGDDWDQVIINWLLKSIADEFNIDLSKNKMAMQRLKDAAEKAKIELSGINTTTISLPFIAMDSSGQPINFEKELNRATFDNLTKNLIERLKKPVLDAMKESKLSLVDIDQVLMVGGSTRMPAVQNLVKELTGKEPNHSLNPDEVVAIGAAIQGGVLAGEIDDILLLDVTPLTLSIETMGGVATPLIPRNTKIPVSKSQIFSTAADNQPSVDIRIVQGERSLAADNKLLGNFELSGIEPAPRGVPQIEIKFNIDANGIMSVNAKDLKTQKETSITIKDSQGLSQDEIDKMIKEAEENKEKDAKVKHERELVNRADSLINQLEQVSKTENVPQEQKDVFNKQIEDLTNARDAQDYVKLEAEVKKVEDLLTNAAKFAQQAQQQNPDNQNNNKDDVTEATVTDDSTKK</sequence>
<proteinExistence type="inferred from homology"/>
<organism>
    <name type="scientific">Ureaplasma parvum serovar 3 (strain ATCC 700970)</name>
    <dbReference type="NCBI Taxonomy" id="273119"/>
    <lineage>
        <taxon>Bacteria</taxon>
        <taxon>Bacillati</taxon>
        <taxon>Mycoplasmatota</taxon>
        <taxon>Mycoplasmoidales</taxon>
        <taxon>Mycoplasmoidaceae</taxon>
        <taxon>Ureaplasma</taxon>
    </lineage>
</organism>
<reference key="1">
    <citation type="journal article" date="2000" name="Nature">
        <title>The complete sequence of the mucosal pathogen Ureaplasma urealyticum.</title>
        <authorList>
            <person name="Glass J.I."/>
            <person name="Lefkowitz E.J."/>
            <person name="Glass J.S."/>
            <person name="Heiner C.R."/>
            <person name="Chen E.Y."/>
            <person name="Cassell G.H."/>
        </authorList>
    </citation>
    <scope>NUCLEOTIDE SEQUENCE [LARGE SCALE GENOMIC DNA]</scope>
    <source>
        <strain>ATCC 700970</strain>
    </source>
</reference>
<protein>
    <recommendedName>
        <fullName>Chaperone protein DnaK</fullName>
    </recommendedName>
    <alternativeName>
        <fullName>HSP70</fullName>
    </alternativeName>
    <alternativeName>
        <fullName>Heat shock 70 kDa protein</fullName>
    </alternativeName>
    <alternativeName>
        <fullName>Heat shock protein 70</fullName>
    </alternativeName>
</protein>
<accession>Q9PQF2</accession>
<dbReference type="EMBL" id="AF222894">
    <property type="protein sequence ID" value="AAF30748.1"/>
    <property type="molecule type" value="Genomic_DNA"/>
</dbReference>
<dbReference type="RefSeq" id="WP_006688469.1">
    <property type="nucleotide sequence ID" value="NC_002162.1"/>
</dbReference>
<dbReference type="SMR" id="Q9PQF2"/>
<dbReference type="STRING" id="273119.UU339"/>
<dbReference type="EnsemblBacteria" id="AAF30748">
    <property type="protein sequence ID" value="AAF30748"/>
    <property type="gene ID" value="UU339"/>
</dbReference>
<dbReference type="GeneID" id="29672518"/>
<dbReference type="KEGG" id="uur:UU339"/>
<dbReference type="eggNOG" id="COG0443">
    <property type="taxonomic scope" value="Bacteria"/>
</dbReference>
<dbReference type="HOGENOM" id="CLU_005965_2_4_14"/>
<dbReference type="OrthoDB" id="9766019at2"/>
<dbReference type="Proteomes" id="UP000000423">
    <property type="component" value="Chromosome"/>
</dbReference>
<dbReference type="GO" id="GO:0005524">
    <property type="term" value="F:ATP binding"/>
    <property type="evidence" value="ECO:0007669"/>
    <property type="project" value="UniProtKB-UniRule"/>
</dbReference>
<dbReference type="GO" id="GO:0140662">
    <property type="term" value="F:ATP-dependent protein folding chaperone"/>
    <property type="evidence" value="ECO:0007669"/>
    <property type="project" value="InterPro"/>
</dbReference>
<dbReference type="GO" id="GO:0051082">
    <property type="term" value="F:unfolded protein binding"/>
    <property type="evidence" value="ECO:0007669"/>
    <property type="project" value="InterPro"/>
</dbReference>
<dbReference type="CDD" id="cd10234">
    <property type="entry name" value="ASKHA_NBD_HSP70_DnaK-like"/>
    <property type="match status" value="1"/>
</dbReference>
<dbReference type="FunFam" id="2.60.34.10:FF:000014">
    <property type="entry name" value="Chaperone protein DnaK HSP70"/>
    <property type="match status" value="1"/>
</dbReference>
<dbReference type="FunFam" id="3.30.420.40:FF:000071">
    <property type="entry name" value="Molecular chaperone DnaK"/>
    <property type="match status" value="1"/>
</dbReference>
<dbReference type="FunFam" id="3.90.640.10:FF:000003">
    <property type="entry name" value="Molecular chaperone DnaK"/>
    <property type="match status" value="1"/>
</dbReference>
<dbReference type="Gene3D" id="3.30.420.40">
    <property type="match status" value="2"/>
</dbReference>
<dbReference type="Gene3D" id="3.90.640.10">
    <property type="entry name" value="Actin, Chain A, domain 4"/>
    <property type="match status" value="1"/>
</dbReference>
<dbReference type="Gene3D" id="2.60.34.10">
    <property type="entry name" value="Substrate Binding Domain Of DNAk, Chain A, domain 1"/>
    <property type="match status" value="1"/>
</dbReference>
<dbReference type="HAMAP" id="MF_00332">
    <property type="entry name" value="DnaK"/>
    <property type="match status" value="1"/>
</dbReference>
<dbReference type="InterPro" id="IPR043129">
    <property type="entry name" value="ATPase_NBD"/>
</dbReference>
<dbReference type="InterPro" id="IPR012725">
    <property type="entry name" value="Chaperone_DnaK"/>
</dbReference>
<dbReference type="InterPro" id="IPR018181">
    <property type="entry name" value="Heat_shock_70_CS"/>
</dbReference>
<dbReference type="InterPro" id="IPR029047">
    <property type="entry name" value="HSP70_peptide-bd_sf"/>
</dbReference>
<dbReference type="InterPro" id="IPR013126">
    <property type="entry name" value="Hsp_70_fam"/>
</dbReference>
<dbReference type="NCBIfam" id="NF001413">
    <property type="entry name" value="PRK00290.1"/>
    <property type="match status" value="1"/>
</dbReference>
<dbReference type="NCBIfam" id="TIGR02350">
    <property type="entry name" value="prok_dnaK"/>
    <property type="match status" value="1"/>
</dbReference>
<dbReference type="PANTHER" id="PTHR19375">
    <property type="entry name" value="HEAT SHOCK PROTEIN 70KDA"/>
    <property type="match status" value="1"/>
</dbReference>
<dbReference type="Pfam" id="PF00012">
    <property type="entry name" value="HSP70"/>
    <property type="match status" value="1"/>
</dbReference>
<dbReference type="PRINTS" id="PR00301">
    <property type="entry name" value="HEATSHOCK70"/>
</dbReference>
<dbReference type="SUPFAM" id="SSF53067">
    <property type="entry name" value="Actin-like ATPase domain"/>
    <property type="match status" value="2"/>
</dbReference>
<dbReference type="SUPFAM" id="SSF100920">
    <property type="entry name" value="Heat shock protein 70kD (HSP70), peptide-binding domain"/>
    <property type="match status" value="1"/>
</dbReference>
<dbReference type="PROSITE" id="PS00297">
    <property type="entry name" value="HSP70_1"/>
    <property type="match status" value="1"/>
</dbReference>
<dbReference type="PROSITE" id="PS00329">
    <property type="entry name" value="HSP70_2"/>
    <property type="match status" value="1"/>
</dbReference>